<feature type="chain" id="PRO_0000376453" description="Probable cell division protein WhiA">
    <location>
        <begin position="1"/>
        <end position="326"/>
    </location>
</feature>
<feature type="DNA-binding region" description="H-T-H motif" evidence="1">
    <location>
        <begin position="275"/>
        <end position="308"/>
    </location>
</feature>
<name>WHIA_CLAM3</name>
<gene>
    <name evidence="1" type="primary">whiA</name>
    <name type="ordered locus">CMM_1746</name>
</gene>
<sequence>MPLTSDVKEELSRVEVSKTTVRAAELATILRFSGGLHLISNRIAVESELDTPLLARRVRKDLAELYGVRSDISVIPASGMRRATHYLVRVMEGGETLARQTGLLDARRRPIRGLPNRLTTGSREEIAAVWRGAFLAAGTLTDPGRSAALEVTCPGNEAAMALVGAAGRLDVSAKAREVRGVHRVVIRDGDAIGQMLRVMGAQGTVVNWEEMRQRREVRATANRLVNFDDANLRRSAQAAVAACARVERAMEILGPDIPEHLKYAGDLRLRFRDSSLDELGHHADPPMTKDAVAGRIRRLLAMADKKAVDEGLPGTDANLPADLDDV</sequence>
<keyword id="KW-0131">Cell cycle</keyword>
<keyword id="KW-0132">Cell division</keyword>
<keyword id="KW-0238">DNA-binding</keyword>
<accession>A5CRT9</accession>
<reference key="1">
    <citation type="journal article" date="2008" name="J. Bacteriol.">
        <title>The genome sequence of the tomato-pathogenic actinomycete Clavibacter michiganensis subsp. michiganensis NCPPB382 reveals a large island involved in pathogenicity.</title>
        <authorList>
            <person name="Gartemann K.-H."/>
            <person name="Abt B."/>
            <person name="Bekel T."/>
            <person name="Burger A."/>
            <person name="Engemann J."/>
            <person name="Fluegel M."/>
            <person name="Gaigalat L."/>
            <person name="Goesmann A."/>
            <person name="Graefen I."/>
            <person name="Kalinowski J."/>
            <person name="Kaup O."/>
            <person name="Kirchner O."/>
            <person name="Krause L."/>
            <person name="Linke B."/>
            <person name="McHardy A."/>
            <person name="Meyer F."/>
            <person name="Pohle S."/>
            <person name="Rueckert C."/>
            <person name="Schneiker S."/>
            <person name="Zellermann E.-M."/>
            <person name="Puehler A."/>
            <person name="Eichenlaub R."/>
            <person name="Kaiser O."/>
            <person name="Bartels D."/>
        </authorList>
    </citation>
    <scope>NUCLEOTIDE SEQUENCE [LARGE SCALE GENOMIC DNA]</scope>
    <source>
        <strain>NCPPB 382</strain>
    </source>
</reference>
<comment type="function">
    <text evidence="1">Involved in cell division and chromosome segregation.</text>
</comment>
<comment type="similarity">
    <text evidence="1">Belongs to the WhiA family.</text>
</comment>
<dbReference type="EMBL" id="AM711867">
    <property type="protein sequence ID" value="CAN01802.1"/>
    <property type="molecule type" value="Genomic_DNA"/>
</dbReference>
<dbReference type="RefSeq" id="WP_012038434.1">
    <property type="nucleotide sequence ID" value="NC_009480.1"/>
</dbReference>
<dbReference type="SMR" id="A5CRT9"/>
<dbReference type="GeneID" id="92947732"/>
<dbReference type="KEGG" id="cmi:CMM_1746"/>
<dbReference type="eggNOG" id="COG1481">
    <property type="taxonomic scope" value="Bacteria"/>
</dbReference>
<dbReference type="HOGENOM" id="CLU_053282_0_0_11"/>
<dbReference type="OrthoDB" id="5197218at2"/>
<dbReference type="Proteomes" id="UP000001564">
    <property type="component" value="Chromosome"/>
</dbReference>
<dbReference type="GO" id="GO:0003677">
    <property type="term" value="F:DNA binding"/>
    <property type="evidence" value="ECO:0007669"/>
    <property type="project" value="UniProtKB-UniRule"/>
</dbReference>
<dbReference type="GO" id="GO:0051301">
    <property type="term" value="P:cell division"/>
    <property type="evidence" value="ECO:0007669"/>
    <property type="project" value="UniProtKB-UniRule"/>
</dbReference>
<dbReference type="GO" id="GO:0043937">
    <property type="term" value="P:regulation of sporulation"/>
    <property type="evidence" value="ECO:0007669"/>
    <property type="project" value="InterPro"/>
</dbReference>
<dbReference type="FunFam" id="3.10.28.10:FF:000001">
    <property type="entry name" value="Probable cell division protein WhiA"/>
    <property type="match status" value="1"/>
</dbReference>
<dbReference type="Gene3D" id="3.10.28.10">
    <property type="entry name" value="Homing endonucleases"/>
    <property type="match status" value="1"/>
</dbReference>
<dbReference type="HAMAP" id="MF_01420">
    <property type="entry name" value="HTH_type_WhiA"/>
    <property type="match status" value="1"/>
</dbReference>
<dbReference type="InterPro" id="IPR027434">
    <property type="entry name" value="Homing_endonucl"/>
</dbReference>
<dbReference type="InterPro" id="IPR018478">
    <property type="entry name" value="Sporu_reg_WhiA_N_dom"/>
</dbReference>
<dbReference type="InterPro" id="IPR003802">
    <property type="entry name" value="Sporulation_regulator_WhiA"/>
</dbReference>
<dbReference type="InterPro" id="IPR023054">
    <property type="entry name" value="Sporulation_regulator_WhiA_C"/>
</dbReference>
<dbReference type="InterPro" id="IPR039518">
    <property type="entry name" value="WhiA_LAGLIDADG_dom"/>
</dbReference>
<dbReference type="NCBIfam" id="TIGR00647">
    <property type="entry name" value="DNA_bind_WhiA"/>
    <property type="match status" value="1"/>
</dbReference>
<dbReference type="PANTHER" id="PTHR37307">
    <property type="entry name" value="CELL DIVISION PROTEIN WHIA-RELATED"/>
    <property type="match status" value="1"/>
</dbReference>
<dbReference type="PANTHER" id="PTHR37307:SF1">
    <property type="entry name" value="CELL DIVISION PROTEIN WHIA-RELATED"/>
    <property type="match status" value="1"/>
</dbReference>
<dbReference type="Pfam" id="PF02650">
    <property type="entry name" value="HTH_WhiA"/>
    <property type="match status" value="1"/>
</dbReference>
<dbReference type="Pfam" id="PF14527">
    <property type="entry name" value="LAGLIDADG_WhiA"/>
    <property type="match status" value="1"/>
</dbReference>
<dbReference type="Pfam" id="PF10298">
    <property type="entry name" value="WhiA_N"/>
    <property type="match status" value="1"/>
</dbReference>
<proteinExistence type="inferred from homology"/>
<evidence type="ECO:0000255" key="1">
    <source>
        <dbReference type="HAMAP-Rule" id="MF_01420"/>
    </source>
</evidence>
<organism>
    <name type="scientific">Clavibacter michiganensis subsp. michiganensis (strain NCPPB 382)</name>
    <dbReference type="NCBI Taxonomy" id="443906"/>
    <lineage>
        <taxon>Bacteria</taxon>
        <taxon>Bacillati</taxon>
        <taxon>Actinomycetota</taxon>
        <taxon>Actinomycetes</taxon>
        <taxon>Micrococcales</taxon>
        <taxon>Microbacteriaceae</taxon>
        <taxon>Clavibacter</taxon>
    </lineage>
</organism>
<protein>
    <recommendedName>
        <fullName evidence="1">Probable cell division protein WhiA</fullName>
    </recommendedName>
</protein>